<keyword id="KW-0150">Chloroplast</keyword>
<keyword id="KW-0249">Electron transport</keyword>
<keyword id="KW-0472">Membrane</keyword>
<keyword id="KW-0602">Photosynthesis</keyword>
<keyword id="KW-0934">Plastid</keyword>
<keyword id="KW-0793">Thylakoid</keyword>
<keyword id="KW-0812">Transmembrane</keyword>
<keyword id="KW-1133">Transmembrane helix</keyword>
<keyword id="KW-0813">Transport</keyword>
<proteinExistence type="inferred from homology"/>
<sequence>MAVIKKPDLTDPVLRAKLAKGMGHNYYGEPAWPNDLLYMFPVVIFGSFACVIGLAVLDPAAVGEPANPFATPLEILPEWYFYPTFQLLRTVPNKLLGVLLMAAVPAGLLTVPFIENINKFQNPFRRPIATTVFLIGTFAAIWLGIGACLPIDISLTLGLF</sequence>
<name>PETD_TUPAK</name>
<comment type="function">
    <text evidence="2">Component of the cytochrome b6-f complex, which mediates electron transfer between photosystem II (PSII) and photosystem I (PSI), cyclic electron flow around PSI, and state transitions.</text>
</comment>
<comment type="subunit">
    <text evidence="1">The 4 large subunits of the cytochrome b6-f complex are cytochrome b6, subunit IV (17 kDa polypeptide, petD), cytochrome f and the Rieske protein, while the 4 small subunits are petG, petL, petM and petN. The complex functions as a dimer (By similarity).</text>
</comment>
<comment type="subcellular location">
    <subcellularLocation>
        <location evidence="2">Plastid</location>
        <location evidence="2">Chloroplast thylakoid membrane</location>
        <topology evidence="2">Multi-pass membrane protein</topology>
    </subcellularLocation>
</comment>
<comment type="similarity">
    <text evidence="2">Belongs to the cytochrome b family. PetD subfamily.</text>
</comment>
<accession>Q3ZJ11</accession>
<evidence type="ECO:0000250" key="1"/>
<evidence type="ECO:0000255" key="2">
    <source>
        <dbReference type="HAMAP-Rule" id="MF_01344"/>
    </source>
</evidence>
<feature type="chain" id="PRO_0000061886" description="Cytochrome b6-f complex subunit 4">
    <location>
        <begin position="1"/>
        <end position="160"/>
    </location>
</feature>
<feature type="transmembrane region" description="Helical" evidence="2">
    <location>
        <begin position="36"/>
        <end position="56"/>
    </location>
</feature>
<feature type="transmembrane region" description="Helical" evidence="2">
    <location>
        <begin position="95"/>
        <end position="115"/>
    </location>
</feature>
<feature type="transmembrane region" description="Helical" evidence="2">
    <location>
        <begin position="131"/>
        <end position="151"/>
    </location>
</feature>
<reference key="1">
    <citation type="journal article" date="2005" name="Mol. Biol. Evol.">
        <title>The chloroplast genome sequence of the green alga Pseudendoclonium akinetum (Ulvophyceae) reveals unusual structural features and new insights into the branching order of chlorophyte lineages.</title>
        <authorList>
            <person name="Pombert J.-F."/>
            <person name="Otis C."/>
            <person name="Lemieux C."/>
            <person name="Turmel M."/>
        </authorList>
    </citation>
    <scope>NUCLEOTIDE SEQUENCE [LARGE SCALE GENOMIC DNA]</scope>
    <source>
        <strain>UTEX 1912</strain>
    </source>
</reference>
<organism>
    <name type="scientific">Tupiella akineta</name>
    <name type="common">Green alga</name>
    <name type="synonym">Pseudendoclonium akinetum</name>
    <dbReference type="NCBI Taxonomy" id="160070"/>
    <lineage>
        <taxon>Eukaryota</taxon>
        <taxon>Viridiplantae</taxon>
        <taxon>Chlorophyta</taxon>
        <taxon>Ulvophyceae</taxon>
        <taxon>OUU clade</taxon>
        <taxon>Ulotrichales</taxon>
        <taxon>Tupiellaceae</taxon>
        <taxon>Tupiella</taxon>
    </lineage>
</organism>
<gene>
    <name evidence="2" type="primary">petD</name>
</gene>
<geneLocation type="chloroplast"/>
<protein>
    <recommendedName>
        <fullName evidence="2">Cytochrome b6-f complex subunit 4</fullName>
    </recommendedName>
    <alternativeName>
        <fullName evidence="2">17 kDa polypeptide</fullName>
    </alternativeName>
</protein>
<dbReference type="EMBL" id="AY835431">
    <property type="protein sequence ID" value="AAV80678.1"/>
    <property type="molecule type" value="Genomic_DNA"/>
</dbReference>
<dbReference type="RefSeq" id="YP_636256.1">
    <property type="nucleotide sequence ID" value="NC_008114.1"/>
</dbReference>
<dbReference type="SMR" id="Q3ZJ11"/>
<dbReference type="GeneID" id="4108751"/>
<dbReference type="GO" id="GO:0009535">
    <property type="term" value="C:chloroplast thylakoid membrane"/>
    <property type="evidence" value="ECO:0007669"/>
    <property type="project" value="UniProtKB-SubCell"/>
</dbReference>
<dbReference type="GO" id="GO:0005739">
    <property type="term" value="C:mitochondrion"/>
    <property type="evidence" value="ECO:0007669"/>
    <property type="project" value="GOC"/>
</dbReference>
<dbReference type="GO" id="GO:0045158">
    <property type="term" value="F:electron transporter, transferring electrons within cytochrome b6/f complex of photosystem II activity"/>
    <property type="evidence" value="ECO:0007669"/>
    <property type="project" value="UniProtKB-UniRule"/>
</dbReference>
<dbReference type="GO" id="GO:0045156">
    <property type="term" value="F:electron transporter, transferring electrons within the cyclic electron transport pathway of photosynthesis activity"/>
    <property type="evidence" value="ECO:0007669"/>
    <property type="project" value="InterPro"/>
</dbReference>
<dbReference type="GO" id="GO:0008121">
    <property type="term" value="F:ubiquinol-cytochrome-c reductase activity"/>
    <property type="evidence" value="ECO:0007669"/>
    <property type="project" value="TreeGrafter"/>
</dbReference>
<dbReference type="GO" id="GO:0006122">
    <property type="term" value="P:mitochondrial electron transport, ubiquinol to cytochrome c"/>
    <property type="evidence" value="ECO:0007669"/>
    <property type="project" value="TreeGrafter"/>
</dbReference>
<dbReference type="GO" id="GO:0009767">
    <property type="term" value="P:photosynthetic electron transport chain"/>
    <property type="evidence" value="ECO:0007669"/>
    <property type="project" value="InterPro"/>
</dbReference>
<dbReference type="CDD" id="cd00290">
    <property type="entry name" value="cytochrome_b_C"/>
    <property type="match status" value="1"/>
</dbReference>
<dbReference type="FunFam" id="1.10.287.980:FF:000001">
    <property type="entry name" value="Cytochrome b6-f complex subunit 4"/>
    <property type="match status" value="1"/>
</dbReference>
<dbReference type="FunFam" id="1.20.5.510:FF:000002">
    <property type="entry name" value="Cytochrome b6-f complex subunit 4"/>
    <property type="match status" value="1"/>
</dbReference>
<dbReference type="Gene3D" id="1.10.287.980">
    <property type="entry name" value="plastocyanin oxidoreductase"/>
    <property type="match status" value="1"/>
</dbReference>
<dbReference type="Gene3D" id="1.20.5.510">
    <property type="entry name" value="Single helix bin"/>
    <property type="match status" value="1"/>
</dbReference>
<dbReference type="HAMAP" id="MF_01344">
    <property type="entry name" value="Cytb6_f_subIV"/>
    <property type="match status" value="1"/>
</dbReference>
<dbReference type="InterPro" id="IPR005798">
    <property type="entry name" value="Cyt_b/b6_C"/>
</dbReference>
<dbReference type="InterPro" id="IPR036150">
    <property type="entry name" value="Cyt_b/b6_C_sf"/>
</dbReference>
<dbReference type="InterPro" id="IPR005870">
    <property type="entry name" value="Cyt_b6/f_cplx_suIV"/>
</dbReference>
<dbReference type="InterPro" id="IPR048260">
    <property type="entry name" value="Cytochrome_b_C_euk/bac"/>
</dbReference>
<dbReference type="NCBIfam" id="TIGR01156">
    <property type="entry name" value="cytb6_f_IV"/>
    <property type="match status" value="1"/>
</dbReference>
<dbReference type="PANTHER" id="PTHR19271">
    <property type="entry name" value="CYTOCHROME B"/>
    <property type="match status" value="1"/>
</dbReference>
<dbReference type="PANTHER" id="PTHR19271:SF41">
    <property type="entry name" value="CYTOCHROME B_B6 C-TERMINAL REGION PROFILE DOMAIN-CONTAINING PROTEIN"/>
    <property type="match status" value="1"/>
</dbReference>
<dbReference type="Pfam" id="PF00032">
    <property type="entry name" value="Cytochrom_B_C"/>
    <property type="match status" value="1"/>
</dbReference>
<dbReference type="PIRSF" id="PIRSF000033">
    <property type="entry name" value="B6f_17K"/>
    <property type="match status" value="1"/>
</dbReference>
<dbReference type="SUPFAM" id="SSF81648">
    <property type="entry name" value="a domain/subunit of cytochrome bc1 complex (Ubiquinol-cytochrome c reductase)"/>
    <property type="match status" value="1"/>
</dbReference>
<dbReference type="PROSITE" id="PS51003">
    <property type="entry name" value="CYTB_CTER"/>
    <property type="match status" value="1"/>
</dbReference>